<dbReference type="EMBL" id="CP000157">
    <property type="protein sequence ID" value="ABC63599.1"/>
    <property type="molecule type" value="Genomic_DNA"/>
</dbReference>
<dbReference type="SMR" id="Q2N9P2"/>
<dbReference type="STRING" id="314225.ELI_07535"/>
<dbReference type="KEGG" id="eli:ELI_07535"/>
<dbReference type="eggNOG" id="COG0356">
    <property type="taxonomic scope" value="Bacteria"/>
</dbReference>
<dbReference type="HOGENOM" id="CLU_041018_0_2_5"/>
<dbReference type="Proteomes" id="UP000008808">
    <property type="component" value="Chromosome"/>
</dbReference>
<dbReference type="GO" id="GO:0005886">
    <property type="term" value="C:plasma membrane"/>
    <property type="evidence" value="ECO:0007669"/>
    <property type="project" value="UniProtKB-SubCell"/>
</dbReference>
<dbReference type="GO" id="GO:0045259">
    <property type="term" value="C:proton-transporting ATP synthase complex"/>
    <property type="evidence" value="ECO:0007669"/>
    <property type="project" value="UniProtKB-KW"/>
</dbReference>
<dbReference type="GO" id="GO:0046933">
    <property type="term" value="F:proton-transporting ATP synthase activity, rotational mechanism"/>
    <property type="evidence" value="ECO:0007669"/>
    <property type="project" value="UniProtKB-UniRule"/>
</dbReference>
<dbReference type="CDD" id="cd00310">
    <property type="entry name" value="ATP-synt_Fo_a_6"/>
    <property type="match status" value="1"/>
</dbReference>
<dbReference type="Gene3D" id="1.20.120.220">
    <property type="entry name" value="ATP synthase, F0 complex, subunit A"/>
    <property type="match status" value="1"/>
</dbReference>
<dbReference type="HAMAP" id="MF_01393">
    <property type="entry name" value="ATP_synth_a_bact"/>
    <property type="match status" value="1"/>
</dbReference>
<dbReference type="InterPro" id="IPR000568">
    <property type="entry name" value="ATP_synth_F0_asu"/>
</dbReference>
<dbReference type="InterPro" id="IPR045083">
    <property type="entry name" value="ATP_synth_F0_asu_bact/mt"/>
</dbReference>
<dbReference type="InterPro" id="IPR035908">
    <property type="entry name" value="F0_ATP_A_sf"/>
</dbReference>
<dbReference type="NCBIfam" id="TIGR01131">
    <property type="entry name" value="ATP_synt_6_or_A"/>
    <property type="match status" value="1"/>
</dbReference>
<dbReference type="NCBIfam" id="NF004482">
    <property type="entry name" value="PRK05815.2-4"/>
    <property type="match status" value="1"/>
</dbReference>
<dbReference type="PANTHER" id="PTHR11410">
    <property type="entry name" value="ATP SYNTHASE SUBUNIT A"/>
    <property type="match status" value="1"/>
</dbReference>
<dbReference type="PANTHER" id="PTHR11410:SF0">
    <property type="entry name" value="ATP SYNTHASE SUBUNIT A"/>
    <property type="match status" value="1"/>
</dbReference>
<dbReference type="Pfam" id="PF00119">
    <property type="entry name" value="ATP-synt_A"/>
    <property type="match status" value="1"/>
</dbReference>
<dbReference type="PRINTS" id="PR00123">
    <property type="entry name" value="ATPASEA"/>
</dbReference>
<dbReference type="SUPFAM" id="SSF81336">
    <property type="entry name" value="F1F0 ATP synthase subunit A"/>
    <property type="match status" value="1"/>
</dbReference>
<keyword id="KW-0066">ATP synthesis</keyword>
<keyword id="KW-0997">Cell inner membrane</keyword>
<keyword id="KW-1003">Cell membrane</keyword>
<keyword id="KW-0138">CF(0)</keyword>
<keyword id="KW-0375">Hydrogen ion transport</keyword>
<keyword id="KW-0406">Ion transport</keyword>
<keyword id="KW-0472">Membrane</keyword>
<keyword id="KW-1185">Reference proteome</keyword>
<keyword id="KW-0812">Transmembrane</keyword>
<keyword id="KW-1133">Transmembrane helix</keyword>
<keyword id="KW-0813">Transport</keyword>
<reference key="1">
    <citation type="journal article" date="2009" name="J. Bacteriol.">
        <title>Complete genome sequence of Erythrobacter litoralis HTCC2594.</title>
        <authorList>
            <person name="Oh H.M."/>
            <person name="Giovannoni S.J."/>
            <person name="Ferriera S."/>
            <person name="Johnson J."/>
            <person name="Cho J.C."/>
        </authorList>
    </citation>
    <scope>NUCLEOTIDE SEQUENCE [LARGE SCALE GENOMIC DNA]</scope>
    <source>
        <strain>HTCC2594</strain>
    </source>
</reference>
<gene>
    <name evidence="1" type="primary">atpB</name>
    <name type="ordered locus">ELI_07535</name>
</gene>
<comment type="function">
    <text evidence="1">Key component of the proton channel; it plays a direct role in the translocation of protons across the membrane.</text>
</comment>
<comment type="subunit">
    <text evidence="1">F-type ATPases have 2 components, CF(1) - the catalytic core - and CF(0) - the membrane proton channel. CF(1) has five subunits: alpha(3), beta(3), gamma(1), delta(1), epsilon(1). CF(0) has four main subunits: a, b, b' and c.</text>
</comment>
<comment type="subcellular location">
    <subcellularLocation>
        <location evidence="1">Cell inner membrane</location>
        <topology evidence="1">Multi-pass membrane protein</topology>
    </subcellularLocation>
</comment>
<comment type="similarity">
    <text evidence="1">Belongs to the ATPase A chain family.</text>
</comment>
<protein>
    <recommendedName>
        <fullName evidence="1">ATP synthase subunit a</fullName>
    </recommendedName>
    <alternativeName>
        <fullName evidence="1">ATP synthase F0 sector subunit a</fullName>
    </alternativeName>
    <alternativeName>
        <fullName evidence="1">F-ATPase subunit 6</fullName>
    </alternativeName>
</protein>
<feature type="chain" id="PRO_0000362298" description="ATP synthase subunit a">
    <location>
        <begin position="1"/>
        <end position="262"/>
    </location>
</feature>
<feature type="transmembrane region" description="Helical" evidence="1">
    <location>
        <begin position="32"/>
        <end position="52"/>
    </location>
</feature>
<feature type="transmembrane region" description="Helical" evidence="1">
    <location>
        <begin position="98"/>
        <end position="118"/>
    </location>
</feature>
<feature type="transmembrane region" description="Helical" evidence="1">
    <location>
        <begin position="127"/>
        <end position="147"/>
    </location>
</feature>
<feature type="transmembrane region" description="Helical" evidence="1">
    <location>
        <begin position="153"/>
        <end position="173"/>
    </location>
</feature>
<feature type="transmembrane region" description="Helical" evidence="1">
    <location>
        <begin position="189"/>
        <end position="209"/>
    </location>
</feature>
<feature type="transmembrane region" description="Helical" evidence="1">
    <location>
        <begin position="219"/>
        <end position="239"/>
    </location>
</feature>
<evidence type="ECO:0000255" key="1">
    <source>
        <dbReference type="HAMAP-Rule" id="MF_01393"/>
    </source>
</evidence>
<organism>
    <name type="scientific">Erythrobacter litoralis (strain HTCC2594)</name>
    <dbReference type="NCBI Taxonomy" id="314225"/>
    <lineage>
        <taxon>Bacteria</taxon>
        <taxon>Pseudomonadati</taxon>
        <taxon>Pseudomonadota</taxon>
        <taxon>Alphaproteobacteria</taxon>
        <taxon>Sphingomonadales</taxon>
        <taxon>Erythrobacteraceae</taxon>
        <taxon>Erythrobacter/Porphyrobacter group</taxon>
        <taxon>Erythrobacter</taxon>
    </lineage>
</organism>
<name>ATP6_ERYLH</name>
<proteinExistence type="inferred from homology"/>
<accession>Q2N9P2</accession>
<sequence length="262" mass="28565">MAAESGKVDPMKQFSIEPMLGSEGWEIAGYNIAFTNSAAWMALTTVLLAVFVWGGMKGQLVPGRWQMMVESFTSFIDDMLEVNIGKAGRKYVPYVFSLFMFILFGNLLGLLPLGVLGIHPFTFTSHFTITGVLAIISFSIVLIVGFWKHGFHFFSLFVPSGTPLPMIPIIFPIELISFLVRPFSLALRLFVAMMAGHVLLKVLSSFVIDGINAGAGFGLLVGAPSFILMIGISALEILVAGIQAYVFALLTSLYINDAENLH</sequence>